<accession>A6V8S8</accession>
<comment type="function">
    <text evidence="1">Joins adenosylcobinamide-GDP and alpha-ribazole to generate adenosylcobalamin (Ado-cobalamin). Also synthesizes adenosylcobalamin 5'-phosphate from adenosylcobinamide-GDP and alpha-ribazole 5'-phosphate.</text>
</comment>
<comment type="catalytic activity">
    <reaction evidence="1">
        <text>alpha-ribazole + adenosylcob(III)inamide-GDP = adenosylcob(III)alamin + GMP + H(+)</text>
        <dbReference type="Rhea" id="RHEA:16049"/>
        <dbReference type="ChEBI" id="CHEBI:10329"/>
        <dbReference type="ChEBI" id="CHEBI:15378"/>
        <dbReference type="ChEBI" id="CHEBI:18408"/>
        <dbReference type="ChEBI" id="CHEBI:58115"/>
        <dbReference type="ChEBI" id="CHEBI:60487"/>
        <dbReference type="EC" id="2.7.8.26"/>
    </reaction>
</comment>
<comment type="catalytic activity">
    <reaction evidence="1">
        <text>alpha-ribazole 5'-phosphate + adenosylcob(III)inamide-GDP = adenosylcob(III)alamin 5'-phosphate + GMP + H(+)</text>
        <dbReference type="Rhea" id="RHEA:23560"/>
        <dbReference type="ChEBI" id="CHEBI:15378"/>
        <dbReference type="ChEBI" id="CHEBI:57918"/>
        <dbReference type="ChEBI" id="CHEBI:58115"/>
        <dbReference type="ChEBI" id="CHEBI:60487"/>
        <dbReference type="ChEBI" id="CHEBI:60493"/>
        <dbReference type="EC" id="2.7.8.26"/>
    </reaction>
</comment>
<comment type="cofactor">
    <cofactor evidence="1">
        <name>Mg(2+)</name>
        <dbReference type="ChEBI" id="CHEBI:18420"/>
    </cofactor>
</comment>
<comment type="pathway">
    <text evidence="1">Cofactor biosynthesis; adenosylcobalamin biosynthesis; adenosylcobalamin from cob(II)yrinate a,c-diamide: step 7/7.</text>
</comment>
<comment type="subcellular location">
    <subcellularLocation>
        <location evidence="1">Cell inner membrane</location>
        <topology evidence="1">Multi-pass membrane protein</topology>
    </subcellularLocation>
</comment>
<comment type="similarity">
    <text evidence="1">Belongs to the CobS family.</text>
</comment>
<reference key="1">
    <citation type="submission" date="2007-06" db="EMBL/GenBank/DDBJ databases">
        <authorList>
            <person name="Dodson R.J."/>
            <person name="Harkins D."/>
            <person name="Paulsen I.T."/>
        </authorList>
    </citation>
    <scope>NUCLEOTIDE SEQUENCE [LARGE SCALE GENOMIC DNA]</scope>
    <source>
        <strain>DSM 24068 / PA7</strain>
    </source>
</reference>
<proteinExistence type="inferred from homology"/>
<protein>
    <recommendedName>
        <fullName evidence="1">Adenosylcobinamide-GDP ribazoletransferase</fullName>
        <ecNumber evidence="1">2.7.8.26</ecNumber>
    </recommendedName>
    <alternativeName>
        <fullName evidence="1">Cobalamin synthase</fullName>
    </alternativeName>
    <alternativeName>
        <fullName evidence="1">Cobalamin-5'-phosphate synthase</fullName>
    </alternativeName>
</protein>
<name>COBS_PSEP7</name>
<feature type="chain" id="PRO_1000062090" description="Adenosylcobinamide-GDP ribazoletransferase">
    <location>
        <begin position="1"/>
        <end position="245"/>
    </location>
</feature>
<feature type="transmembrane region" description="Helical" evidence="1">
    <location>
        <begin position="31"/>
        <end position="51"/>
    </location>
</feature>
<feature type="transmembrane region" description="Helical" evidence="1">
    <location>
        <begin position="61"/>
        <end position="81"/>
    </location>
</feature>
<feature type="transmembrane region" description="Helical" evidence="1">
    <location>
        <begin position="113"/>
        <end position="133"/>
    </location>
</feature>
<feature type="transmembrane region" description="Helical" evidence="1">
    <location>
        <begin position="138"/>
        <end position="158"/>
    </location>
</feature>
<feature type="transmembrane region" description="Helical" evidence="1">
    <location>
        <begin position="192"/>
        <end position="212"/>
    </location>
</feature>
<keyword id="KW-0997">Cell inner membrane</keyword>
<keyword id="KW-1003">Cell membrane</keyword>
<keyword id="KW-0169">Cobalamin biosynthesis</keyword>
<keyword id="KW-0460">Magnesium</keyword>
<keyword id="KW-0472">Membrane</keyword>
<keyword id="KW-0808">Transferase</keyword>
<keyword id="KW-0812">Transmembrane</keyword>
<keyword id="KW-1133">Transmembrane helix</keyword>
<evidence type="ECO:0000255" key="1">
    <source>
        <dbReference type="HAMAP-Rule" id="MF_00719"/>
    </source>
</evidence>
<dbReference type="EC" id="2.7.8.26" evidence="1"/>
<dbReference type="EMBL" id="CP000744">
    <property type="protein sequence ID" value="ABR84152.1"/>
    <property type="molecule type" value="Genomic_DNA"/>
</dbReference>
<dbReference type="RefSeq" id="WP_012076589.1">
    <property type="nucleotide sequence ID" value="NC_009656.1"/>
</dbReference>
<dbReference type="KEGG" id="pap:PSPA7_4108"/>
<dbReference type="HOGENOM" id="CLU_057426_3_1_6"/>
<dbReference type="UniPathway" id="UPA00148">
    <property type="reaction ID" value="UER00238"/>
</dbReference>
<dbReference type="Proteomes" id="UP000001582">
    <property type="component" value="Chromosome"/>
</dbReference>
<dbReference type="GO" id="GO:0005886">
    <property type="term" value="C:plasma membrane"/>
    <property type="evidence" value="ECO:0007669"/>
    <property type="project" value="UniProtKB-SubCell"/>
</dbReference>
<dbReference type="GO" id="GO:0051073">
    <property type="term" value="F:adenosylcobinamide-GDP ribazoletransferase activity"/>
    <property type="evidence" value="ECO:0007669"/>
    <property type="project" value="UniProtKB-UniRule"/>
</dbReference>
<dbReference type="GO" id="GO:0008818">
    <property type="term" value="F:cobalamin 5'-phosphate synthase activity"/>
    <property type="evidence" value="ECO:0007669"/>
    <property type="project" value="UniProtKB-UniRule"/>
</dbReference>
<dbReference type="GO" id="GO:0009236">
    <property type="term" value="P:cobalamin biosynthetic process"/>
    <property type="evidence" value="ECO:0007669"/>
    <property type="project" value="UniProtKB-UniRule"/>
</dbReference>
<dbReference type="HAMAP" id="MF_00719">
    <property type="entry name" value="CobS"/>
    <property type="match status" value="1"/>
</dbReference>
<dbReference type="InterPro" id="IPR003805">
    <property type="entry name" value="CobS"/>
</dbReference>
<dbReference type="NCBIfam" id="TIGR00317">
    <property type="entry name" value="cobS"/>
    <property type="match status" value="1"/>
</dbReference>
<dbReference type="NCBIfam" id="NF001278">
    <property type="entry name" value="PRK00235.1-5"/>
    <property type="match status" value="1"/>
</dbReference>
<dbReference type="PANTHER" id="PTHR34148">
    <property type="entry name" value="ADENOSYLCOBINAMIDE-GDP RIBAZOLETRANSFERASE"/>
    <property type="match status" value="1"/>
</dbReference>
<dbReference type="PANTHER" id="PTHR34148:SF1">
    <property type="entry name" value="ADENOSYLCOBINAMIDE-GDP RIBAZOLETRANSFERASE"/>
    <property type="match status" value="1"/>
</dbReference>
<dbReference type="Pfam" id="PF02654">
    <property type="entry name" value="CobS"/>
    <property type="match status" value="1"/>
</dbReference>
<organism>
    <name type="scientific">Pseudomonas paraeruginosa (strain DSM 24068 / PA7)</name>
    <name type="common">Pseudomonas aeruginosa (strain PA7)</name>
    <dbReference type="NCBI Taxonomy" id="381754"/>
    <lineage>
        <taxon>Bacteria</taxon>
        <taxon>Pseudomonadati</taxon>
        <taxon>Pseudomonadota</taxon>
        <taxon>Gammaproteobacteria</taxon>
        <taxon>Pseudomonadales</taxon>
        <taxon>Pseudomonadaceae</taxon>
        <taxon>Pseudomonas</taxon>
        <taxon>Pseudomonas paraeruginosa</taxon>
    </lineage>
</organism>
<sequence>MREALQSLLVALQFLTRLPVRLSAMPTPEQFGRAVLCYPLVGVLIGVVLYGAARSLDGTPPLLQAALLLSLWVALSGALHLDGLADMADAWVGGLGDRERTLAIMKDPRSGPAAVVALVLVLLLKFGALAALLGAGRPGLLLLAPWLARSSLPLLFLTTPYARPGGLGQAIAEHLPARSLPWVLGVSFGLALAFGLSGLLALLVTLMLFAWLRSRFLARLGGTTGDTAGALVELTECAVLVALAL</sequence>
<gene>
    <name evidence="1" type="primary">cobS</name>
    <name type="ordered locus">PSPA7_4108</name>
</gene>